<reference key="1">
    <citation type="journal article" date="2007" name="J. Bacteriol.">
        <title>Complete genome sequence of Haemophilus somnus (Histophilus somni) strain 129Pt and comparison to Haemophilus ducreyi 35000HP and Haemophilus influenzae Rd.</title>
        <authorList>
            <person name="Challacombe J.F."/>
            <person name="Duncan A.J."/>
            <person name="Brettin T.S."/>
            <person name="Bruce D."/>
            <person name="Chertkov O."/>
            <person name="Detter J.C."/>
            <person name="Han C.S."/>
            <person name="Misra M."/>
            <person name="Richardson P."/>
            <person name="Tapia R."/>
            <person name="Thayer N."/>
            <person name="Xie G."/>
            <person name="Inzana T.J."/>
        </authorList>
    </citation>
    <scope>NUCLEOTIDE SEQUENCE [LARGE SCALE GENOMIC DNA]</scope>
    <source>
        <strain>129Pt</strain>
    </source>
</reference>
<evidence type="ECO:0000255" key="1">
    <source>
        <dbReference type="HAMAP-Rule" id="MF_01637"/>
    </source>
</evidence>
<organism>
    <name type="scientific">Histophilus somni (strain 129Pt)</name>
    <name type="common">Haemophilus somnus</name>
    <dbReference type="NCBI Taxonomy" id="205914"/>
    <lineage>
        <taxon>Bacteria</taxon>
        <taxon>Pseudomonadati</taxon>
        <taxon>Pseudomonadota</taxon>
        <taxon>Gammaproteobacteria</taxon>
        <taxon>Pasteurellales</taxon>
        <taxon>Pasteurellaceae</taxon>
        <taxon>Histophilus</taxon>
    </lineage>
</organism>
<keyword id="KW-0004">4Fe-4S</keyword>
<keyword id="KW-0408">Iron</keyword>
<keyword id="KW-0411">Iron-sulfur</keyword>
<keyword id="KW-0479">Metal-binding</keyword>
<gene>
    <name evidence="1" type="primary">nfuA</name>
    <name type="ordered locus">HS_1491</name>
</gene>
<feature type="chain" id="PRO_0000268232" description="Fe/S biogenesis protein NfuA">
    <location>
        <begin position="1"/>
        <end position="193"/>
    </location>
</feature>
<feature type="binding site" evidence="1">
    <location>
        <position position="150"/>
    </location>
    <ligand>
        <name>[4Fe-4S] cluster</name>
        <dbReference type="ChEBI" id="CHEBI:49883"/>
    </ligand>
</feature>
<feature type="binding site" evidence="1">
    <location>
        <position position="153"/>
    </location>
    <ligand>
        <name>[4Fe-4S] cluster</name>
        <dbReference type="ChEBI" id="CHEBI:49883"/>
    </ligand>
</feature>
<protein>
    <recommendedName>
        <fullName evidence="1">Fe/S biogenesis protein NfuA</fullName>
    </recommendedName>
</protein>
<dbReference type="EMBL" id="CP000436">
    <property type="protein sequence ID" value="ABI25764.1"/>
    <property type="molecule type" value="Genomic_DNA"/>
</dbReference>
<dbReference type="SMR" id="Q0I5I6"/>
<dbReference type="KEGG" id="hso:HS_1491"/>
<dbReference type="eggNOG" id="COG0316">
    <property type="taxonomic scope" value="Bacteria"/>
</dbReference>
<dbReference type="eggNOG" id="COG0694">
    <property type="taxonomic scope" value="Bacteria"/>
</dbReference>
<dbReference type="HOGENOM" id="CLU_094569_0_0_6"/>
<dbReference type="GO" id="GO:0051539">
    <property type="term" value="F:4 iron, 4 sulfur cluster binding"/>
    <property type="evidence" value="ECO:0007669"/>
    <property type="project" value="UniProtKB-UniRule"/>
</dbReference>
<dbReference type="GO" id="GO:0005506">
    <property type="term" value="F:iron ion binding"/>
    <property type="evidence" value="ECO:0007669"/>
    <property type="project" value="InterPro"/>
</dbReference>
<dbReference type="GO" id="GO:0016226">
    <property type="term" value="P:iron-sulfur cluster assembly"/>
    <property type="evidence" value="ECO:0007669"/>
    <property type="project" value="UniProtKB-UniRule"/>
</dbReference>
<dbReference type="GO" id="GO:0051604">
    <property type="term" value="P:protein maturation"/>
    <property type="evidence" value="ECO:0007669"/>
    <property type="project" value="UniProtKB-UniRule"/>
</dbReference>
<dbReference type="Gene3D" id="3.30.300.130">
    <property type="entry name" value="Fe-S cluster assembly (FSCA)"/>
    <property type="match status" value="1"/>
</dbReference>
<dbReference type="Gene3D" id="2.60.300.12">
    <property type="entry name" value="HesB-like domain"/>
    <property type="match status" value="1"/>
</dbReference>
<dbReference type="HAMAP" id="MF_01637">
    <property type="entry name" value="Fe_S_biogen_NfuA"/>
    <property type="match status" value="1"/>
</dbReference>
<dbReference type="InterPro" id="IPR017726">
    <property type="entry name" value="Fe/S_biogenesis_protein_NfuA"/>
</dbReference>
<dbReference type="InterPro" id="IPR000361">
    <property type="entry name" value="FeS_biogenesis"/>
</dbReference>
<dbReference type="InterPro" id="IPR034904">
    <property type="entry name" value="FSCA_dom_sf"/>
</dbReference>
<dbReference type="InterPro" id="IPR035903">
    <property type="entry name" value="HesB-like_dom_sf"/>
</dbReference>
<dbReference type="InterPro" id="IPR001075">
    <property type="entry name" value="NIF_FeS_clus_asmbl_NifU_C"/>
</dbReference>
<dbReference type="NCBIfam" id="NF008392">
    <property type="entry name" value="PRK11190.1"/>
    <property type="match status" value="1"/>
</dbReference>
<dbReference type="NCBIfam" id="TIGR03341">
    <property type="entry name" value="YhgI_GntY"/>
    <property type="match status" value="1"/>
</dbReference>
<dbReference type="PANTHER" id="PTHR11178:SF51">
    <property type="entry name" value="FE_S BIOGENESIS PROTEIN NFUA"/>
    <property type="match status" value="1"/>
</dbReference>
<dbReference type="PANTHER" id="PTHR11178">
    <property type="entry name" value="IRON-SULFUR CLUSTER SCAFFOLD PROTEIN NFU-RELATED"/>
    <property type="match status" value="1"/>
</dbReference>
<dbReference type="Pfam" id="PF01521">
    <property type="entry name" value="Fe-S_biosyn"/>
    <property type="match status" value="1"/>
</dbReference>
<dbReference type="Pfam" id="PF01106">
    <property type="entry name" value="NifU"/>
    <property type="match status" value="1"/>
</dbReference>
<dbReference type="SUPFAM" id="SSF117916">
    <property type="entry name" value="Fe-S cluster assembly (FSCA) domain-like"/>
    <property type="match status" value="1"/>
</dbReference>
<dbReference type="SUPFAM" id="SSF89360">
    <property type="entry name" value="HesB-like domain"/>
    <property type="match status" value="1"/>
</dbReference>
<name>NFUA_HISS1</name>
<comment type="function">
    <text evidence="1">Involved in iron-sulfur cluster biogenesis. Binds a 4Fe-4S cluster, can transfer this cluster to apoproteins, and thereby intervenes in the maturation of Fe/S proteins. Could also act as a scaffold/chaperone for damaged Fe/S proteins.</text>
</comment>
<comment type="cofactor">
    <cofactor evidence="1">
        <name>[4Fe-4S] cluster</name>
        <dbReference type="ChEBI" id="CHEBI:49883"/>
    </cofactor>
    <text evidence="1">Binds 1 [4Fe-4S] cluster per subunit. The cluster is presumably bound at the interface of two monomers.</text>
</comment>
<comment type="subunit">
    <text evidence="1">Homodimer.</text>
</comment>
<comment type="similarity">
    <text evidence="1">Belongs to the NfuA family.</text>
</comment>
<accession>Q0I5I6</accession>
<proteinExistence type="inferred from homology"/>
<sequence length="193" mass="21369">MQITISEAAQAHFRRLLDQQEEGTNIRIFVVNPGSPNAECGVSYCPKNAVETTDHEIKYSEFSAFIDEVSFPFLEDAEIDYITEEMGSQLTLKAPNAKMRKVADDAPLIERVEYAIQTQINPQLAGHGGHITLIEITKDGKAILQFGGGCNGCSMVDVTLKDGIEKQLLAMFADELTGVKDVTEHQRGEHSYY</sequence>